<protein>
    <recommendedName>
        <fullName>Probable RNA-dependent RNA polymerase 5</fullName>
        <shortName>AtRDRP5</shortName>
        <ecNumber>2.7.7.48</ecNumber>
    </recommendedName>
    <alternativeName>
        <fullName>RNA-directed RNA polymerase 5</fullName>
    </alternativeName>
</protein>
<gene>
    <name type="primary">RDR5</name>
    <name type="synonym">RDRP5</name>
    <name type="ordered locus">At2g19930</name>
    <name type="ORF">F6F22.4</name>
</gene>
<organism>
    <name type="scientific">Arabidopsis thaliana</name>
    <name type="common">Mouse-ear cress</name>
    <dbReference type="NCBI Taxonomy" id="3702"/>
    <lineage>
        <taxon>Eukaryota</taxon>
        <taxon>Viridiplantae</taxon>
        <taxon>Streptophyta</taxon>
        <taxon>Embryophyta</taxon>
        <taxon>Tracheophyta</taxon>
        <taxon>Spermatophyta</taxon>
        <taxon>Magnoliopsida</taxon>
        <taxon>eudicotyledons</taxon>
        <taxon>Gunneridae</taxon>
        <taxon>Pentapetalae</taxon>
        <taxon>rosids</taxon>
        <taxon>malvids</taxon>
        <taxon>Brassicales</taxon>
        <taxon>Brassicaceae</taxon>
        <taxon>Camelineae</taxon>
        <taxon>Arabidopsis</taxon>
    </lineage>
</organism>
<comment type="function">
    <text evidence="1">Probably involved in the RNA silencing pathway and required for the generation of small interfering RNAs (siRNAs).</text>
</comment>
<comment type="catalytic activity">
    <reaction>
        <text>RNA(n) + a ribonucleoside 5'-triphosphate = RNA(n+1) + diphosphate</text>
        <dbReference type="Rhea" id="RHEA:21248"/>
        <dbReference type="Rhea" id="RHEA-COMP:14527"/>
        <dbReference type="Rhea" id="RHEA-COMP:17342"/>
        <dbReference type="ChEBI" id="CHEBI:33019"/>
        <dbReference type="ChEBI" id="CHEBI:61557"/>
        <dbReference type="ChEBI" id="CHEBI:140395"/>
        <dbReference type="EC" id="2.7.7.48"/>
    </reaction>
</comment>
<comment type="similarity">
    <text evidence="3">Belongs to the RdRP family.</text>
</comment>
<comment type="sequence caution" evidence="3">
    <conflict type="erroneous gene model prediction">
        <sequence resource="EMBL-CDS" id="AAC62123"/>
    </conflict>
</comment>
<feature type="chain" id="PRO_0000404676" description="Probable RNA-dependent RNA polymerase 5">
    <location>
        <begin position="1"/>
        <end position="977"/>
    </location>
</feature>
<feature type="region of interest" description="Disordered" evidence="2">
    <location>
        <begin position="103"/>
        <end position="122"/>
    </location>
</feature>
<accession>O82188</accession>
<accession>Q0WNQ6</accession>
<sequence>MNQASSRIRIALSGRIETALENIYRKHNLTPINDETRQRLSSIPENLGFELVRKVFSLQAGLIYNLDSFIVSKVNQAVSFTGYPQPANSLSPSGRHVSRVLQEEMSVDSDAPSPKSLKSEDKGGSLHIPQLVALGELEFKKVFLLLSYIPGQHVGQVITADEIRLWKDLPMVEYEAAVWDRLGRHYCPQKDRRMLQWDSGKTHYYQCNVAPNGSYTFKVLSALQGPLLEHTGTHLHKVLGDDNVLTVKFADVQKSSSTYSIDHYFTYKGIAKNGIMIGLRRYQFFVFKDGGKEEKKKDLSTKKVKCYFIRTDSTAFYDMQNPYILTGKSIYEARMHFMHVHRAPTLANYMARFSLILSKTKTLEVDMTGITFDQIDDIHCHDQDGKDVLDKNKKPCIHSDGTGYISEDLARMCPLNIFKGKCLRSESIQEACYQDPPLLIQFRMFYDGYAVKGTFLLNKKLCPRTVQVRPSMIKVSKDPSLSNFSTFNALEVVTTSNPPKRTKLSKNLVALLSYGGIPNEFFLDILLNTLEESKSIFYNKRAALNAALNYGEMDDQNAAQMILVGIPLDEPHLKNYLSILLKTEKNDLKAGKLPVTESYYLMGTVDPTGALKEDEVCVILESGQISGEVLVYRNPGLHFGDIHILKATYVKALEEYVGNSKFAVFFPQKGPRSLGDEIAGGDFDGDMYFISRNPELLENFKPSEPWVSLTPPSKSNSGRAPSQLSPEELEEELFEMFLTAGFHASNVIGIAADSWLTIMDRFLILGDDRAEEKAEMKKKMLELIDIYYDALDAPKKGDKVYLPNKLKPDIFPHYMERDKKFQSTSILGLIFDFVKSQTTEEPSPSSEISKLPCFEDEPVSEFHMQKCRLWYDNYRTEMTQAMKTDKDESANEVIQRYKQEFYGAAGFEDSKKSLEELYPQALALYKIVYDYAIHAGVSKCRFVWKVAGPVLCRFYLNKKMQEKCLVCAPSVLKELWG</sequence>
<proteinExistence type="evidence at transcript level"/>
<dbReference type="EC" id="2.7.7.48"/>
<dbReference type="EMBL" id="AC005169">
    <property type="protein sequence ID" value="AAC62123.1"/>
    <property type="status" value="ALT_SEQ"/>
    <property type="molecule type" value="Genomic_DNA"/>
</dbReference>
<dbReference type="EMBL" id="CP002685">
    <property type="protein sequence ID" value="AEC06944.1"/>
    <property type="molecule type" value="Genomic_DNA"/>
</dbReference>
<dbReference type="EMBL" id="AK229381">
    <property type="protein sequence ID" value="BAF01243.1"/>
    <property type="molecule type" value="mRNA"/>
</dbReference>
<dbReference type="PIR" id="H84582">
    <property type="entry name" value="H84582"/>
</dbReference>
<dbReference type="RefSeq" id="NP_179583.3">
    <property type="nucleotide sequence ID" value="NM_127551.4"/>
</dbReference>
<dbReference type="SMR" id="O82188"/>
<dbReference type="FunCoup" id="O82188">
    <property type="interactions" value="1"/>
</dbReference>
<dbReference type="STRING" id="3702.O82188"/>
<dbReference type="GlyGen" id="O82188">
    <property type="glycosylation" value="1 site"/>
</dbReference>
<dbReference type="iPTMnet" id="O82188"/>
<dbReference type="PaxDb" id="3702-AT2G19930.1"/>
<dbReference type="EnsemblPlants" id="AT2G19930.1">
    <property type="protein sequence ID" value="AT2G19930.1"/>
    <property type="gene ID" value="AT2G19930"/>
</dbReference>
<dbReference type="GeneID" id="816512"/>
<dbReference type="Gramene" id="AT2G19930.1">
    <property type="protein sequence ID" value="AT2G19930.1"/>
    <property type="gene ID" value="AT2G19930"/>
</dbReference>
<dbReference type="KEGG" id="ath:AT2G19930"/>
<dbReference type="Araport" id="AT2G19930"/>
<dbReference type="TAIR" id="AT2G19930"/>
<dbReference type="eggNOG" id="KOG0988">
    <property type="taxonomic scope" value="Eukaryota"/>
</dbReference>
<dbReference type="HOGENOM" id="CLU_008367_0_0_1"/>
<dbReference type="InParanoid" id="O82188"/>
<dbReference type="OrthoDB" id="6513042at2759"/>
<dbReference type="PRO" id="PR:O82188"/>
<dbReference type="Proteomes" id="UP000006548">
    <property type="component" value="Chromosome 2"/>
</dbReference>
<dbReference type="ExpressionAtlas" id="O82188">
    <property type="expression patterns" value="baseline and differential"/>
</dbReference>
<dbReference type="GO" id="GO:0003723">
    <property type="term" value="F:RNA binding"/>
    <property type="evidence" value="ECO:0007669"/>
    <property type="project" value="UniProtKB-KW"/>
</dbReference>
<dbReference type="GO" id="GO:0003968">
    <property type="term" value="F:RNA-directed RNA polymerase activity"/>
    <property type="evidence" value="ECO:0007669"/>
    <property type="project" value="UniProtKB-KW"/>
</dbReference>
<dbReference type="GO" id="GO:0031047">
    <property type="term" value="P:regulatory ncRNA-mediated gene silencing"/>
    <property type="evidence" value="ECO:0007669"/>
    <property type="project" value="UniProtKB-KW"/>
</dbReference>
<dbReference type="InterPro" id="IPR007855">
    <property type="entry name" value="RNA-dep_RNA_pol_euk-typ"/>
</dbReference>
<dbReference type="PANTHER" id="PTHR23079">
    <property type="entry name" value="RNA-DEPENDENT RNA POLYMERASE"/>
    <property type="match status" value="1"/>
</dbReference>
<dbReference type="PANTHER" id="PTHR23079:SF55">
    <property type="entry name" value="RNA-DIRECTED RNA POLYMERASE"/>
    <property type="match status" value="1"/>
</dbReference>
<dbReference type="Pfam" id="PF05183">
    <property type="entry name" value="RdRP"/>
    <property type="match status" value="1"/>
</dbReference>
<keyword id="KW-0548">Nucleotidyltransferase</keyword>
<keyword id="KW-1185">Reference proteome</keyword>
<keyword id="KW-0694">RNA-binding</keyword>
<keyword id="KW-0696">RNA-directed RNA polymerase</keyword>
<keyword id="KW-0943">RNA-mediated gene silencing</keyword>
<keyword id="KW-0808">Transferase</keyword>
<evidence type="ECO:0000250" key="1"/>
<evidence type="ECO:0000256" key="2">
    <source>
        <dbReference type="SAM" id="MobiDB-lite"/>
    </source>
</evidence>
<evidence type="ECO:0000305" key="3"/>
<reference key="1">
    <citation type="journal article" date="1999" name="Nature">
        <title>Sequence and analysis of chromosome 2 of the plant Arabidopsis thaliana.</title>
        <authorList>
            <person name="Lin X."/>
            <person name="Kaul S."/>
            <person name="Rounsley S.D."/>
            <person name="Shea T.P."/>
            <person name="Benito M.-I."/>
            <person name="Town C.D."/>
            <person name="Fujii C.Y."/>
            <person name="Mason T.M."/>
            <person name="Bowman C.L."/>
            <person name="Barnstead M.E."/>
            <person name="Feldblyum T.V."/>
            <person name="Buell C.R."/>
            <person name="Ketchum K.A."/>
            <person name="Lee J.J."/>
            <person name="Ronning C.M."/>
            <person name="Koo H.L."/>
            <person name="Moffat K.S."/>
            <person name="Cronin L.A."/>
            <person name="Shen M."/>
            <person name="Pai G."/>
            <person name="Van Aken S."/>
            <person name="Umayam L."/>
            <person name="Tallon L.J."/>
            <person name="Gill J.E."/>
            <person name="Adams M.D."/>
            <person name="Carrera A.J."/>
            <person name="Creasy T.H."/>
            <person name="Goodman H.M."/>
            <person name="Somerville C.R."/>
            <person name="Copenhaver G.P."/>
            <person name="Preuss D."/>
            <person name="Nierman W.C."/>
            <person name="White O."/>
            <person name="Eisen J.A."/>
            <person name="Salzberg S.L."/>
            <person name="Fraser C.M."/>
            <person name="Venter J.C."/>
        </authorList>
    </citation>
    <scope>NUCLEOTIDE SEQUENCE [LARGE SCALE GENOMIC DNA]</scope>
    <source>
        <strain>cv. Columbia</strain>
    </source>
</reference>
<reference key="2">
    <citation type="journal article" date="2017" name="Plant J.">
        <title>Araport11: a complete reannotation of the Arabidopsis thaliana reference genome.</title>
        <authorList>
            <person name="Cheng C.Y."/>
            <person name="Krishnakumar V."/>
            <person name="Chan A.P."/>
            <person name="Thibaud-Nissen F."/>
            <person name="Schobel S."/>
            <person name="Town C.D."/>
        </authorList>
    </citation>
    <scope>GENOME REANNOTATION</scope>
    <source>
        <strain>cv. Columbia</strain>
    </source>
</reference>
<reference key="3">
    <citation type="submission" date="2006-07" db="EMBL/GenBank/DDBJ databases">
        <title>Large-scale analysis of RIKEN Arabidopsis full-length (RAFL) cDNAs.</title>
        <authorList>
            <person name="Totoki Y."/>
            <person name="Seki M."/>
            <person name="Ishida J."/>
            <person name="Nakajima M."/>
            <person name="Enju A."/>
            <person name="Kamiya A."/>
            <person name="Narusaka M."/>
            <person name="Shin-i T."/>
            <person name="Nakagawa M."/>
            <person name="Sakamoto N."/>
            <person name="Oishi K."/>
            <person name="Kohara Y."/>
            <person name="Kobayashi M."/>
            <person name="Toyoda A."/>
            <person name="Sakaki Y."/>
            <person name="Sakurai T."/>
            <person name="Iida K."/>
            <person name="Akiyama K."/>
            <person name="Satou M."/>
            <person name="Toyoda T."/>
            <person name="Konagaya A."/>
            <person name="Carninci P."/>
            <person name="Kawai J."/>
            <person name="Hayashizaki Y."/>
            <person name="Shinozaki K."/>
        </authorList>
    </citation>
    <scope>NUCLEOTIDE SEQUENCE [LARGE SCALE MRNA] OF 639-977</scope>
    <source>
        <strain>cv. Columbia</strain>
    </source>
</reference>
<name>RDR5_ARATH</name>